<reference key="1">
    <citation type="journal article" date="2009" name="PLoS Genet.">
        <title>Organised genome dynamics in the Escherichia coli species results in highly diverse adaptive paths.</title>
        <authorList>
            <person name="Touchon M."/>
            <person name="Hoede C."/>
            <person name="Tenaillon O."/>
            <person name="Barbe V."/>
            <person name="Baeriswyl S."/>
            <person name="Bidet P."/>
            <person name="Bingen E."/>
            <person name="Bonacorsi S."/>
            <person name="Bouchier C."/>
            <person name="Bouvet O."/>
            <person name="Calteau A."/>
            <person name="Chiapello H."/>
            <person name="Clermont O."/>
            <person name="Cruveiller S."/>
            <person name="Danchin A."/>
            <person name="Diard M."/>
            <person name="Dossat C."/>
            <person name="Karoui M.E."/>
            <person name="Frapy E."/>
            <person name="Garry L."/>
            <person name="Ghigo J.M."/>
            <person name="Gilles A.M."/>
            <person name="Johnson J."/>
            <person name="Le Bouguenec C."/>
            <person name="Lescat M."/>
            <person name="Mangenot S."/>
            <person name="Martinez-Jehanne V."/>
            <person name="Matic I."/>
            <person name="Nassif X."/>
            <person name="Oztas S."/>
            <person name="Petit M.A."/>
            <person name="Pichon C."/>
            <person name="Rouy Z."/>
            <person name="Ruf C.S."/>
            <person name="Schneider D."/>
            <person name="Tourret J."/>
            <person name="Vacherie B."/>
            <person name="Vallenet D."/>
            <person name="Medigue C."/>
            <person name="Rocha E.P.C."/>
            <person name="Denamur E."/>
        </authorList>
    </citation>
    <scope>NUCLEOTIDE SEQUENCE [LARGE SCALE GENOMIC DNA]</scope>
    <source>
        <strain>S88 / ExPEC</strain>
    </source>
</reference>
<accession>B7MEG9</accession>
<proteinExistence type="inferred from homology"/>
<protein>
    <recommendedName>
        <fullName evidence="1">Methionine--tRNA ligase</fullName>
        <ecNumber evidence="1">6.1.1.10</ecNumber>
    </recommendedName>
    <alternativeName>
        <fullName evidence="1">Methionyl-tRNA synthetase</fullName>
        <shortName evidence="1">MetRS</shortName>
    </alternativeName>
</protein>
<evidence type="ECO:0000255" key="1">
    <source>
        <dbReference type="HAMAP-Rule" id="MF_00098"/>
    </source>
</evidence>
<feature type="chain" id="PRO_1000199287" description="Methionine--tRNA ligase">
    <location>
        <begin position="1"/>
        <end position="677"/>
    </location>
</feature>
<feature type="domain" description="tRNA-binding" evidence="1">
    <location>
        <begin position="575"/>
        <end position="677"/>
    </location>
</feature>
<feature type="short sequence motif" description="'HIGH' region">
    <location>
        <begin position="15"/>
        <end position="25"/>
    </location>
</feature>
<feature type="short sequence motif" description="'KMSKS' region">
    <location>
        <begin position="333"/>
        <end position="337"/>
    </location>
</feature>
<feature type="binding site" evidence="1">
    <location>
        <position position="146"/>
    </location>
    <ligand>
        <name>Zn(2+)</name>
        <dbReference type="ChEBI" id="CHEBI:29105"/>
    </ligand>
</feature>
<feature type="binding site" evidence="1">
    <location>
        <position position="149"/>
    </location>
    <ligand>
        <name>Zn(2+)</name>
        <dbReference type="ChEBI" id="CHEBI:29105"/>
    </ligand>
</feature>
<feature type="binding site" evidence="1">
    <location>
        <position position="159"/>
    </location>
    <ligand>
        <name>Zn(2+)</name>
        <dbReference type="ChEBI" id="CHEBI:29105"/>
    </ligand>
</feature>
<feature type="binding site" evidence="1">
    <location>
        <position position="162"/>
    </location>
    <ligand>
        <name>Zn(2+)</name>
        <dbReference type="ChEBI" id="CHEBI:29105"/>
    </ligand>
</feature>
<feature type="binding site" evidence="1">
    <location>
        <position position="336"/>
    </location>
    <ligand>
        <name>ATP</name>
        <dbReference type="ChEBI" id="CHEBI:30616"/>
    </ligand>
</feature>
<dbReference type="EC" id="6.1.1.10" evidence="1"/>
<dbReference type="EMBL" id="CU928161">
    <property type="protein sequence ID" value="CAR03542.1"/>
    <property type="molecule type" value="Genomic_DNA"/>
</dbReference>
<dbReference type="RefSeq" id="WP_001350700.1">
    <property type="nucleotide sequence ID" value="NC_011742.1"/>
</dbReference>
<dbReference type="SMR" id="B7MEG9"/>
<dbReference type="KEGG" id="ecz:ECS88_2256"/>
<dbReference type="HOGENOM" id="CLU_009710_7_0_6"/>
<dbReference type="Proteomes" id="UP000000747">
    <property type="component" value="Chromosome"/>
</dbReference>
<dbReference type="GO" id="GO:0005829">
    <property type="term" value="C:cytosol"/>
    <property type="evidence" value="ECO:0007669"/>
    <property type="project" value="TreeGrafter"/>
</dbReference>
<dbReference type="GO" id="GO:0005524">
    <property type="term" value="F:ATP binding"/>
    <property type="evidence" value="ECO:0007669"/>
    <property type="project" value="UniProtKB-UniRule"/>
</dbReference>
<dbReference type="GO" id="GO:0046872">
    <property type="term" value="F:metal ion binding"/>
    <property type="evidence" value="ECO:0007669"/>
    <property type="project" value="UniProtKB-KW"/>
</dbReference>
<dbReference type="GO" id="GO:0004825">
    <property type="term" value="F:methionine-tRNA ligase activity"/>
    <property type="evidence" value="ECO:0007669"/>
    <property type="project" value="UniProtKB-UniRule"/>
</dbReference>
<dbReference type="GO" id="GO:0000049">
    <property type="term" value="F:tRNA binding"/>
    <property type="evidence" value="ECO:0007669"/>
    <property type="project" value="UniProtKB-KW"/>
</dbReference>
<dbReference type="GO" id="GO:0006431">
    <property type="term" value="P:methionyl-tRNA aminoacylation"/>
    <property type="evidence" value="ECO:0007669"/>
    <property type="project" value="UniProtKB-UniRule"/>
</dbReference>
<dbReference type="CDD" id="cd07957">
    <property type="entry name" value="Anticodon_Ia_Met"/>
    <property type="match status" value="1"/>
</dbReference>
<dbReference type="CDD" id="cd00814">
    <property type="entry name" value="MetRS_core"/>
    <property type="match status" value="1"/>
</dbReference>
<dbReference type="CDD" id="cd02800">
    <property type="entry name" value="tRNA_bind_EcMetRS_like"/>
    <property type="match status" value="1"/>
</dbReference>
<dbReference type="FunFam" id="1.10.730.10:FF:000005">
    <property type="entry name" value="Methionine--tRNA ligase"/>
    <property type="match status" value="1"/>
</dbReference>
<dbReference type="FunFam" id="2.20.28.20:FF:000001">
    <property type="entry name" value="Methionine--tRNA ligase"/>
    <property type="match status" value="1"/>
</dbReference>
<dbReference type="FunFam" id="2.40.50.140:FF:000042">
    <property type="entry name" value="Methionine--tRNA ligase"/>
    <property type="match status" value="1"/>
</dbReference>
<dbReference type="Gene3D" id="3.40.50.620">
    <property type="entry name" value="HUPs"/>
    <property type="match status" value="1"/>
</dbReference>
<dbReference type="Gene3D" id="1.10.730.10">
    <property type="entry name" value="Isoleucyl-tRNA Synthetase, Domain 1"/>
    <property type="match status" value="1"/>
</dbReference>
<dbReference type="Gene3D" id="2.20.28.20">
    <property type="entry name" value="Methionyl-tRNA synthetase, Zn-domain"/>
    <property type="match status" value="1"/>
</dbReference>
<dbReference type="Gene3D" id="2.40.50.140">
    <property type="entry name" value="Nucleic acid-binding proteins"/>
    <property type="match status" value="1"/>
</dbReference>
<dbReference type="HAMAP" id="MF_00098">
    <property type="entry name" value="Met_tRNA_synth_type1"/>
    <property type="match status" value="1"/>
</dbReference>
<dbReference type="InterPro" id="IPR001412">
    <property type="entry name" value="aa-tRNA-synth_I_CS"/>
</dbReference>
<dbReference type="InterPro" id="IPR041872">
    <property type="entry name" value="Anticodon_Met"/>
</dbReference>
<dbReference type="InterPro" id="IPR004495">
    <property type="entry name" value="Met-tRNA-synth_bsu_C"/>
</dbReference>
<dbReference type="InterPro" id="IPR023458">
    <property type="entry name" value="Met-tRNA_ligase_1"/>
</dbReference>
<dbReference type="InterPro" id="IPR014758">
    <property type="entry name" value="Met-tRNA_synth"/>
</dbReference>
<dbReference type="InterPro" id="IPR015413">
    <property type="entry name" value="Methionyl/Leucyl_tRNA_Synth"/>
</dbReference>
<dbReference type="InterPro" id="IPR033911">
    <property type="entry name" value="MetRS_core"/>
</dbReference>
<dbReference type="InterPro" id="IPR029038">
    <property type="entry name" value="MetRS_Zn"/>
</dbReference>
<dbReference type="InterPro" id="IPR012340">
    <property type="entry name" value="NA-bd_OB-fold"/>
</dbReference>
<dbReference type="InterPro" id="IPR014729">
    <property type="entry name" value="Rossmann-like_a/b/a_fold"/>
</dbReference>
<dbReference type="InterPro" id="IPR002547">
    <property type="entry name" value="tRNA-bd_dom"/>
</dbReference>
<dbReference type="InterPro" id="IPR009080">
    <property type="entry name" value="tRNAsynth_Ia_anticodon-bd"/>
</dbReference>
<dbReference type="NCBIfam" id="TIGR00398">
    <property type="entry name" value="metG"/>
    <property type="match status" value="1"/>
</dbReference>
<dbReference type="NCBIfam" id="TIGR00399">
    <property type="entry name" value="metG_C_term"/>
    <property type="match status" value="1"/>
</dbReference>
<dbReference type="NCBIfam" id="NF001100">
    <property type="entry name" value="PRK00133.1"/>
    <property type="match status" value="1"/>
</dbReference>
<dbReference type="PANTHER" id="PTHR45765">
    <property type="entry name" value="METHIONINE--TRNA LIGASE"/>
    <property type="match status" value="1"/>
</dbReference>
<dbReference type="PANTHER" id="PTHR45765:SF1">
    <property type="entry name" value="METHIONINE--TRNA LIGASE, CYTOPLASMIC"/>
    <property type="match status" value="1"/>
</dbReference>
<dbReference type="Pfam" id="PF19303">
    <property type="entry name" value="Anticodon_3"/>
    <property type="match status" value="1"/>
</dbReference>
<dbReference type="Pfam" id="PF09334">
    <property type="entry name" value="tRNA-synt_1g"/>
    <property type="match status" value="1"/>
</dbReference>
<dbReference type="Pfam" id="PF01588">
    <property type="entry name" value="tRNA_bind"/>
    <property type="match status" value="1"/>
</dbReference>
<dbReference type="PRINTS" id="PR01041">
    <property type="entry name" value="TRNASYNTHMET"/>
</dbReference>
<dbReference type="SUPFAM" id="SSF47323">
    <property type="entry name" value="Anticodon-binding domain of a subclass of class I aminoacyl-tRNA synthetases"/>
    <property type="match status" value="1"/>
</dbReference>
<dbReference type="SUPFAM" id="SSF57770">
    <property type="entry name" value="Methionyl-tRNA synthetase (MetRS), Zn-domain"/>
    <property type="match status" value="1"/>
</dbReference>
<dbReference type="SUPFAM" id="SSF50249">
    <property type="entry name" value="Nucleic acid-binding proteins"/>
    <property type="match status" value="1"/>
</dbReference>
<dbReference type="SUPFAM" id="SSF52374">
    <property type="entry name" value="Nucleotidylyl transferase"/>
    <property type="match status" value="1"/>
</dbReference>
<dbReference type="PROSITE" id="PS00178">
    <property type="entry name" value="AA_TRNA_LIGASE_I"/>
    <property type="match status" value="1"/>
</dbReference>
<dbReference type="PROSITE" id="PS50886">
    <property type="entry name" value="TRBD"/>
    <property type="match status" value="1"/>
</dbReference>
<gene>
    <name evidence="1" type="primary">metG</name>
    <name type="ordered locus">ECS88_2256</name>
</gene>
<keyword id="KW-0030">Aminoacyl-tRNA synthetase</keyword>
<keyword id="KW-0067">ATP-binding</keyword>
<keyword id="KW-0963">Cytoplasm</keyword>
<keyword id="KW-0436">Ligase</keyword>
<keyword id="KW-0479">Metal-binding</keyword>
<keyword id="KW-0547">Nucleotide-binding</keyword>
<keyword id="KW-0648">Protein biosynthesis</keyword>
<keyword id="KW-1185">Reference proteome</keyword>
<keyword id="KW-0694">RNA-binding</keyword>
<keyword id="KW-0820">tRNA-binding</keyword>
<keyword id="KW-0862">Zinc</keyword>
<sequence length="677" mass="76284">MTQVAKKILVTCALPYANGSIHLGHMLEHIQADVWVRYQRMRGHEVNFICADDAHGTPIMLKAQQLGITPEQMIGEMSQEHQTDFAGFNISYDNYHSTHSEENRQLSELIYSRLKENGFIKNRTISQLYDPEKGMFLPDRFVKGTCPKCKSPDQYGDNCEVCGATYSPTELIEPKSVVSGATPVMRDSEHFFFDLPSFSEMLQAWTRSGALQEQVANKMQEWFESGLQQWDISRDAPYFGFEIPNAPGKYFYVWLDAPIGYMGSFKNLCDKRGDSVSFDKYWKKDSTAELYHFIGKDIVYFHSLFWPAMLEGSNFRKPTNLFVHGYVTVNGAKMSKSRGTFIKASTWLNHFDADSLRYYYTAKLSSRIDDIDLNLEDFVQRVNADIVNKVVNLASRNAGFINKRFDGVLASELADPQLYKTFTDAAEVIGEAWESREFGKAIREIMALADLANRYVDEQAPWVVAKQEGRDADLQAICSMGINLFRVLMTYLKPVLPKLTERAEAFLNTELTWDGIQQPLLGHKVNPFKALYNRIDMKQVEALVEASKEEVKATAAPVTGPLADDPIQETITFDDFAKVDLRVALIENAEFVEGSDKLLRLTLDLGGEKRNVFSGIRSAYPDPQALIGRHTIMVANLAPRKMRFGISEGMVMAAGPGGKDIFLLSPDAGAKPGHQVK</sequence>
<name>SYM_ECO45</name>
<comment type="function">
    <text evidence="1">Is required not only for elongation of protein synthesis but also for the initiation of all mRNA translation through initiator tRNA(fMet) aminoacylation.</text>
</comment>
<comment type="catalytic activity">
    <reaction evidence="1">
        <text>tRNA(Met) + L-methionine + ATP = L-methionyl-tRNA(Met) + AMP + diphosphate</text>
        <dbReference type="Rhea" id="RHEA:13481"/>
        <dbReference type="Rhea" id="RHEA-COMP:9667"/>
        <dbReference type="Rhea" id="RHEA-COMP:9698"/>
        <dbReference type="ChEBI" id="CHEBI:30616"/>
        <dbReference type="ChEBI" id="CHEBI:33019"/>
        <dbReference type="ChEBI" id="CHEBI:57844"/>
        <dbReference type="ChEBI" id="CHEBI:78442"/>
        <dbReference type="ChEBI" id="CHEBI:78530"/>
        <dbReference type="ChEBI" id="CHEBI:456215"/>
        <dbReference type="EC" id="6.1.1.10"/>
    </reaction>
</comment>
<comment type="cofactor">
    <cofactor evidence="1">
        <name>Zn(2+)</name>
        <dbReference type="ChEBI" id="CHEBI:29105"/>
    </cofactor>
    <text evidence="1">Binds 1 zinc ion per subunit.</text>
</comment>
<comment type="subunit">
    <text evidence="1">Homodimer.</text>
</comment>
<comment type="subcellular location">
    <subcellularLocation>
        <location evidence="1">Cytoplasm</location>
    </subcellularLocation>
</comment>
<comment type="similarity">
    <text evidence="1">Belongs to the class-I aminoacyl-tRNA synthetase family. MetG type 1 subfamily.</text>
</comment>
<organism>
    <name type="scientific">Escherichia coli O45:K1 (strain S88 / ExPEC)</name>
    <dbReference type="NCBI Taxonomy" id="585035"/>
    <lineage>
        <taxon>Bacteria</taxon>
        <taxon>Pseudomonadati</taxon>
        <taxon>Pseudomonadota</taxon>
        <taxon>Gammaproteobacteria</taxon>
        <taxon>Enterobacterales</taxon>
        <taxon>Enterobacteriaceae</taxon>
        <taxon>Escherichia</taxon>
    </lineage>
</organism>